<feature type="chain" id="PRO_0000393224" description="Serine/threonine-protein kinase DCLK2">
    <location>
        <begin position="1"/>
        <end position="767"/>
    </location>
</feature>
<feature type="domain" description="Doublecortin 1" evidence="3">
    <location>
        <begin position="72"/>
        <end position="158"/>
    </location>
</feature>
<feature type="domain" description="Doublecortin 2" evidence="3">
    <location>
        <begin position="196"/>
        <end position="279"/>
    </location>
</feature>
<feature type="domain" description="Protein kinase" evidence="4">
    <location>
        <begin position="409"/>
        <end position="666"/>
    </location>
</feature>
<feature type="region of interest" description="Disordered" evidence="6">
    <location>
        <begin position="1"/>
        <end position="44"/>
    </location>
</feature>
<feature type="region of interest" description="Disordered" evidence="6">
    <location>
        <begin position="301"/>
        <end position="391"/>
    </location>
</feature>
<feature type="region of interest" description="Disordered" evidence="6">
    <location>
        <begin position="721"/>
        <end position="767"/>
    </location>
</feature>
<feature type="compositionally biased region" description="Basic and acidic residues" evidence="6">
    <location>
        <begin position="7"/>
        <end position="19"/>
    </location>
</feature>
<feature type="compositionally biased region" description="Low complexity" evidence="6">
    <location>
        <begin position="24"/>
        <end position="43"/>
    </location>
</feature>
<feature type="compositionally biased region" description="Low complexity" evidence="6">
    <location>
        <begin position="301"/>
        <end position="311"/>
    </location>
</feature>
<feature type="compositionally biased region" description="Polar residues" evidence="6">
    <location>
        <begin position="327"/>
        <end position="338"/>
    </location>
</feature>
<feature type="compositionally biased region" description="Low complexity" evidence="6">
    <location>
        <begin position="339"/>
        <end position="362"/>
    </location>
</feature>
<feature type="compositionally biased region" description="Polar residues" evidence="6">
    <location>
        <begin position="369"/>
        <end position="380"/>
    </location>
</feature>
<feature type="compositionally biased region" description="Basic and acidic residues" evidence="6">
    <location>
        <begin position="721"/>
        <end position="734"/>
    </location>
</feature>
<feature type="compositionally biased region" description="Pro residues" evidence="6">
    <location>
        <begin position="738"/>
        <end position="751"/>
    </location>
</feature>
<feature type="active site" description="Proton acceptor" evidence="4 5">
    <location>
        <position position="530"/>
    </location>
</feature>
<feature type="binding site" evidence="4">
    <location>
        <begin position="415"/>
        <end position="423"/>
    </location>
    <ligand>
        <name>ATP</name>
        <dbReference type="ChEBI" id="CHEBI:30616"/>
    </ligand>
</feature>
<feature type="binding site" evidence="4">
    <location>
        <position position="438"/>
    </location>
    <ligand>
        <name>ATP</name>
        <dbReference type="ChEBI" id="CHEBI:30616"/>
    </ligand>
</feature>
<feature type="modified residue" description="Phosphothreonine" evidence="2">
    <location>
        <position position="61"/>
    </location>
</feature>
<feature type="modified residue" description="Phosphoserine" evidence="2">
    <location>
        <position position="377"/>
    </location>
</feature>
<feature type="modified residue" description="Phosphoserine" evidence="10">
    <location>
        <position position="662"/>
    </location>
</feature>
<feature type="modified residue" description="Phosphothreonine" evidence="10">
    <location>
        <position position="681"/>
    </location>
</feature>
<feature type="splice variant" id="VSP_038897" description="In isoform 3." evidence="8">
    <location>
        <begin position="320"/>
        <end position="335"/>
    </location>
</feature>
<feature type="splice variant" id="VSP_038898" description="In isoform 2." evidence="8">
    <original>NTALDKEGQ</original>
    <variation>VQGHEHGSR</variation>
    <location>
        <begin position="707"/>
        <end position="715"/>
    </location>
</feature>
<feature type="splice variant" id="VSP_038899" description="In isoform 2." evidence="8">
    <location>
        <begin position="716"/>
        <end position="767"/>
    </location>
</feature>
<feature type="mutagenesis site" description="Loss of autophosphorylation." evidence="7">
    <original>K</original>
    <variation>A</variation>
    <location>
        <position position="438"/>
    </location>
</feature>
<feature type="sequence conflict" description="In Ref. 1; AAV85464." evidence="9" ref="1">
    <original>V</original>
    <variation>I</variation>
    <location>
        <position position="126"/>
    </location>
</feature>
<feature type="sequence conflict" description="In Ref. 1; AAV85464." evidence="9" ref="1">
    <original>P</original>
    <variation>L</variation>
    <location>
        <position position="308"/>
    </location>
</feature>
<feature type="sequence conflict" description="In Ref. 1; AAV85461/AAV85462." evidence="9" ref="1">
    <original>R</original>
    <variation>C</variation>
    <location>
        <position position="387"/>
    </location>
</feature>
<proteinExistence type="evidence at protein level"/>
<gene>
    <name type="primary">Dclk2</name>
    <name type="synonym">Dcamkl2</name>
    <name type="synonym">Dck2</name>
</gene>
<evidence type="ECO:0000250" key="1"/>
<evidence type="ECO:0000250" key="2">
    <source>
        <dbReference type="UniProtKB" id="Q8N568"/>
    </source>
</evidence>
<evidence type="ECO:0000255" key="3">
    <source>
        <dbReference type="PROSITE-ProRule" id="PRU00072"/>
    </source>
</evidence>
<evidence type="ECO:0000255" key="4">
    <source>
        <dbReference type="PROSITE-ProRule" id="PRU00159"/>
    </source>
</evidence>
<evidence type="ECO:0000255" key="5">
    <source>
        <dbReference type="PROSITE-ProRule" id="PRU10027"/>
    </source>
</evidence>
<evidence type="ECO:0000256" key="6">
    <source>
        <dbReference type="SAM" id="MobiDB-lite"/>
    </source>
</evidence>
<evidence type="ECO:0000269" key="7">
    <source>
    </source>
</evidence>
<evidence type="ECO:0000303" key="8">
    <source>
    </source>
</evidence>
<evidence type="ECO:0000305" key="9"/>
<evidence type="ECO:0007744" key="10">
    <source>
    </source>
</evidence>
<protein>
    <recommendedName>
        <fullName>Serine/threonine-protein kinase DCLK2</fullName>
        <ecNumber>2.7.11.1</ecNumber>
    </recommendedName>
    <alternativeName>
        <fullName>CaMK-like CREB regulatory kinase 2</fullName>
        <shortName>CL2</shortName>
        <shortName>CLICK-II</shortName>
        <shortName>CLICK2</shortName>
    </alternativeName>
    <alternativeName>
        <fullName>Doublecortin-like and CAM kinase-like 2</fullName>
    </alternativeName>
    <alternativeName>
        <fullName>Doublecortin-like kinase 2</fullName>
    </alternativeName>
</protein>
<accession>Q5MPA9</accession>
<accession>Q5MPA7</accession>
<accession>Q5MPA8</accession>
<accession>Q5MPB0</accession>
<keyword id="KW-0025">Alternative splicing</keyword>
<keyword id="KW-0067">ATP-binding</keyword>
<keyword id="KW-0963">Cytoplasm</keyword>
<keyword id="KW-0206">Cytoskeleton</keyword>
<keyword id="KW-0418">Kinase</keyword>
<keyword id="KW-0547">Nucleotide-binding</keyword>
<keyword id="KW-0597">Phosphoprotein</keyword>
<keyword id="KW-1185">Reference proteome</keyword>
<keyword id="KW-0677">Repeat</keyword>
<keyword id="KW-0723">Serine/threonine-protein kinase</keyword>
<keyword id="KW-0808">Transferase</keyword>
<dbReference type="EC" id="2.7.11.1"/>
<dbReference type="EMBL" id="AY673997">
    <property type="protein sequence ID" value="AAV85461.1"/>
    <property type="molecule type" value="mRNA"/>
</dbReference>
<dbReference type="EMBL" id="AY673998">
    <property type="protein sequence ID" value="AAV85462.1"/>
    <property type="molecule type" value="mRNA"/>
</dbReference>
<dbReference type="EMBL" id="AY673999">
    <property type="protein sequence ID" value="AAV85463.1"/>
    <property type="molecule type" value="mRNA"/>
</dbReference>
<dbReference type="EMBL" id="AY674000">
    <property type="protein sequence ID" value="AAV85464.1"/>
    <property type="molecule type" value="mRNA"/>
</dbReference>
<dbReference type="RefSeq" id="NP_001009691.3">
    <molecule id="Q5MPA9-1"/>
    <property type="nucleotide sequence ID" value="NM_001009691.3"/>
</dbReference>
<dbReference type="RefSeq" id="NP_001182761.1">
    <molecule id="Q5MPA9-2"/>
    <property type="nucleotide sequence ID" value="NM_001195832.1"/>
</dbReference>
<dbReference type="RefSeq" id="XP_006232741.1">
    <property type="nucleotide sequence ID" value="XM_006232679.3"/>
</dbReference>
<dbReference type="RefSeq" id="XP_006232743.1">
    <molecule id="Q5MPA9-3"/>
    <property type="nucleotide sequence ID" value="XM_006232681.5"/>
</dbReference>
<dbReference type="RefSeq" id="XP_017446402.1">
    <property type="nucleotide sequence ID" value="XM_017590913.1"/>
</dbReference>
<dbReference type="SMR" id="Q5MPA9"/>
<dbReference type="BioGRID" id="259725">
    <property type="interactions" value="2"/>
</dbReference>
<dbReference type="FunCoup" id="Q5MPA9">
    <property type="interactions" value="2468"/>
</dbReference>
<dbReference type="IntAct" id="Q5MPA9">
    <property type="interactions" value="1"/>
</dbReference>
<dbReference type="MINT" id="Q5MPA9"/>
<dbReference type="STRING" id="10116.ENSRNOP00000062805"/>
<dbReference type="GlyGen" id="Q5MPA9">
    <property type="glycosylation" value="1 site"/>
</dbReference>
<dbReference type="iPTMnet" id="Q5MPA9"/>
<dbReference type="PhosphoSitePlus" id="Q5MPA9"/>
<dbReference type="PaxDb" id="10116-ENSRNOP00000053894"/>
<dbReference type="GeneID" id="310698"/>
<dbReference type="KEGG" id="rno:310698"/>
<dbReference type="UCSC" id="RGD:1308384">
    <molecule id="Q5MPA9-1"/>
    <property type="organism name" value="rat"/>
</dbReference>
<dbReference type="AGR" id="RGD:1308384"/>
<dbReference type="CTD" id="166614"/>
<dbReference type="RGD" id="1308384">
    <property type="gene designation" value="Dclk2"/>
</dbReference>
<dbReference type="VEuPathDB" id="HostDB:ENSRNOG00000016550"/>
<dbReference type="eggNOG" id="KOG0032">
    <property type="taxonomic scope" value="Eukaryota"/>
</dbReference>
<dbReference type="InParanoid" id="Q5MPA9"/>
<dbReference type="OrthoDB" id="1738954at2759"/>
<dbReference type="PhylomeDB" id="Q5MPA9"/>
<dbReference type="TreeFam" id="TF318770"/>
<dbReference type="PRO" id="PR:Q5MPA9"/>
<dbReference type="Proteomes" id="UP000002494">
    <property type="component" value="Chromosome 2"/>
</dbReference>
<dbReference type="Bgee" id="ENSRNOG00000016550">
    <property type="expression patterns" value="Expressed in cerebellum and 19 other cell types or tissues"/>
</dbReference>
<dbReference type="ExpressionAtlas" id="Q5MPA9">
    <property type="expression patterns" value="baseline and differential"/>
</dbReference>
<dbReference type="GO" id="GO:0005737">
    <property type="term" value="C:cytoplasm"/>
    <property type="evidence" value="ECO:0000318"/>
    <property type="project" value="GO_Central"/>
</dbReference>
<dbReference type="GO" id="GO:0005856">
    <property type="term" value="C:cytoskeleton"/>
    <property type="evidence" value="ECO:0007669"/>
    <property type="project" value="UniProtKB-SubCell"/>
</dbReference>
<dbReference type="GO" id="GO:0005524">
    <property type="term" value="F:ATP binding"/>
    <property type="evidence" value="ECO:0007669"/>
    <property type="project" value="UniProtKB-KW"/>
</dbReference>
<dbReference type="GO" id="GO:0008017">
    <property type="term" value="F:microtubule binding"/>
    <property type="evidence" value="ECO:0000266"/>
    <property type="project" value="RGD"/>
</dbReference>
<dbReference type="GO" id="GO:0004672">
    <property type="term" value="F:protein kinase activity"/>
    <property type="evidence" value="ECO:0000266"/>
    <property type="project" value="RGD"/>
</dbReference>
<dbReference type="GO" id="GO:0106310">
    <property type="term" value="F:protein serine kinase activity"/>
    <property type="evidence" value="ECO:0007669"/>
    <property type="project" value="RHEA"/>
</dbReference>
<dbReference type="GO" id="GO:0004674">
    <property type="term" value="F:protein serine/threonine kinase activity"/>
    <property type="evidence" value="ECO:0000318"/>
    <property type="project" value="GO_Central"/>
</dbReference>
<dbReference type="GO" id="GO:0021766">
    <property type="term" value="P:hippocampus development"/>
    <property type="evidence" value="ECO:0000266"/>
    <property type="project" value="RGD"/>
</dbReference>
<dbReference type="GO" id="GO:0035556">
    <property type="term" value="P:intracellular signal transduction"/>
    <property type="evidence" value="ECO:0007669"/>
    <property type="project" value="InterPro"/>
</dbReference>
<dbReference type="GO" id="GO:0000226">
    <property type="term" value="P:microtubule cytoskeleton organization"/>
    <property type="evidence" value="ECO:0000266"/>
    <property type="project" value="RGD"/>
</dbReference>
<dbReference type="GO" id="GO:1900181">
    <property type="term" value="P:negative regulation of protein localization to nucleus"/>
    <property type="evidence" value="ECO:0000266"/>
    <property type="project" value="RGD"/>
</dbReference>
<dbReference type="GO" id="GO:0034504">
    <property type="term" value="P:protein localization to nucleus"/>
    <property type="evidence" value="ECO:0000266"/>
    <property type="project" value="RGD"/>
</dbReference>
<dbReference type="GO" id="GO:0021860">
    <property type="term" value="P:pyramidal neuron development"/>
    <property type="evidence" value="ECO:0000266"/>
    <property type="project" value="RGD"/>
</dbReference>
<dbReference type="CDD" id="cd17141">
    <property type="entry name" value="DCX1_DCLK2"/>
    <property type="match status" value="1"/>
</dbReference>
<dbReference type="CDD" id="cd17069">
    <property type="entry name" value="DCX2"/>
    <property type="match status" value="1"/>
</dbReference>
<dbReference type="CDD" id="cd14184">
    <property type="entry name" value="STKc_DCKL2"/>
    <property type="match status" value="1"/>
</dbReference>
<dbReference type="FunFam" id="1.10.510.10:FF:000066">
    <property type="entry name" value="Serine/threonine-protein kinase DCLK1 isoform 2"/>
    <property type="match status" value="1"/>
</dbReference>
<dbReference type="FunFam" id="3.30.200.20:FF:000057">
    <property type="entry name" value="Serine/threonine-protein kinase DCLK1 isoform 2"/>
    <property type="match status" value="1"/>
</dbReference>
<dbReference type="FunFam" id="3.10.20.230:FF:000001">
    <property type="entry name" value="serine/threonine-protein kinase DCLK1 isoform X1"/>
    <property type="match status" value="1"/>
</dbReference>
<dbReference type="FunFam" id="3.10.20.230:FF:000002">
    <property type="entry name" value="serine/threonine-protein kinase DCLK2 isoform X1"/>
    <property type="match status" value="1"/>
</dbReference>
<dbReference type="Gene3D" id="3.10.20.230">
    <property type="entry name" value="Doublecortin domain"/>
    <property type="match status" value="2"/>
</dbReference>
<dbReference type="Gene3D" id="3.30.200.20">
    <property type="entry name" value="Phosphorylase Kinase, domain 1"/>
    <property type="match status" value="1"/>
</dbReference>
<dbReference type="Gene3D" id="1.10.510.10">
    <property type="entry name" value="Transferase(Phosphotransferase) domain 1"/>
    <property type="match status" value="1"/>
</dbReference>
<dbReference type="InterPro" id="IPR003533">
    <property type="entry name" value="Doublecortin_dom"/>
</dbReference>
<dbReference type="InterPro" id="IPR036572">
    <property type="entry name" value="Doublecortin_dom_sf"/>
</dbReference>
<dbReference type="InterPro" id="IPR011009">
    <property type="entry name" value="Kinase-like_dom_sf"/>
</dbReference>
<dbReference type="InterPro" id="IPR000719">
    <property type="entry name" value="Prot_kinase_dom"/>
</dbReference>
<dbReference type="InterPro" id="IPR017441">
    <property type="entry name" value="Protein_kinase_ATP_BS"/>
</dbReference>
<dbReference type="InterPro" id="IPR008271">
    <property type="entry name" value="Ser/Thr_kinase_AS"/>
</dbReference>
<dbReference type="PANTHER" id="PTHR24347">
    <property type="entry name" value="SERINE/THREONINE-PROTEIN KINASE"/>
    <property type="match status" value="1"/>
</dbReference>
<dbReference type="Pfam" id="PF03607">
    <property type="entry name" value="DCX"/>
    <property type="match status" value="2"/>
</dbReference>
<dbReference type="Pfam" id="PF00069">
    <property type="entry name" value="Pkinase"/>
    <property type="match status" value="1"/>
</dbReference>
<dbReference type="SMART" id="SM00537">
    <property type="entry name" value="DCX"/>
    <property type="match status" value="2"/>
</dbReference>
<dbReference type="SMART" id="SM00220">
    <property type="entry name" value="S_TKc"/>
    <property type="match status" value="1"/>
</dbReference>
<dbReference type="SUPFAM" id="SSF89837">
    <property type="entry name" value="Doublecortin (DC)"/>
    <property type="match status" value="2"/>
</dbReference>
<dbReference type="SUPFAM" id="SSF56112">
    <property type="entry name" value="Protein kinase-like (PK-like)"/>
    <property type="match status" value="1"/>
</dbReference>
<dbReference type="PROSITE" id="PS50309">
    <property type="entry name" value="DC"/>
    <property type="match status" value="2"/>
</dbReference>
<dbReference type="PROSITE" id="PS00107">
    <property type="entry name" value="PROTEIN_KINASE_ATP"/>
    <property type="match status" value="1"/>
</dbReference>
<dbReference type="PROSITE" id="PS50011">
    <property type="entry name" value="PROTEIN_KINASE_DOM"/>
    <property type="match status" value="1"/>
</dbReference>
<dbReference type="PROSITE" id="PS00108">
    <property type="entry name" value="PROTEIN_KINASE_ST"/>
    <property type="match status" value="1"/>
</dbReference>
<name>DCLK2_RAT</name>
<reference key="1">
    <citation type="journal article" date="2005" name="J. Biol. Chem.">
        <title>Doublecortin kinase-2, a novel doublecortin-related protein kinase associated with terminal segments of axons and dendrites.</title>
        <authorList>
            <person name="Edelman A.M."/>
            <person name="Kim W.Y."/>
            <person name="Higgins D."/>
            <person name="Goldstein E.G."/>
            <person name="Oberdoerster M."/>
            <person name="Sigurdson W."/>
        </authorList>
    </citation>
    <scope>NUCLEOTIDE SEQUENCE [MRNA] (ISOFORMS 1 AND 2)</scope>
    <scope>NUCLEOTIDE SEQUENCE [MRNA] OF 269-386 (ISOFORM 3)</scope>
    <scope>INTERACTION WITH MICROTUBULES</scope>
    <scope>SUBCELLULAR LOCATION</scope>
    <scope>AUTOPHOSPHORYLATION</scope>
    <scope>MUTAGENESIS OF LYS-438</scope>
    <source>
        <strain>Sprague-Dawley</strain>
        <tissue>Brain</tissue>
    </source>
</reference>
<reference key="2">
    <citation type="journal article" date="2006" name="Proc. Natl. Acad. Sci. U.S.A.">
        <title>Quantitative phosphoproteomics of vasopressin-sensitive renal cells: regulation of aquaporin-2 phosphorylation at two sites.</title>
        <authorList>
            <person name="Hoffert J.D."/>
            <person name="Pisitkun T."/>
            <person name="Wang G."/>
            <person name="Shen R.-F."/>
            <person name="Knepper M.A."/>
        </authorList>
    </citation>
    <scope>PHOSPHORYLATION [LARGE SCALE ANALYSIS] AT SER-662 AND THR-681</scope>
    <scope>IDENTIFICATION BY MASS SPECTROMETRY [LARGE SCALE ANALYSIS]</scope>
</reference>
<comment type="function">
    <text evidence="1">Protein kinase with a significantly reduced Ca(2+)+/CAM affinity and dependence compared to other members of the CaMK family. May play a role in the down-regulation of CRE-dependent gene activation probably by phosphorylation of the CREB coactivator CRTC2/TORC2 and the resulting retention of TORC2 in the cytoplasm (By similarity).</text>
</comment>
<comment type="catalytic activity">
    <reaction>
        <text>L-seryl-[protein] + ATP = O-phospho-L-seryl-[protein] + ADP + H(+)</text>
        <dbReference type="Rhea" id="RHEA:17989"/>
        <dbReference type="Rhea" id="RHEA-COMP:9863"/>
        <dbReference type="Rhea" id="RHEA-COMP:11604"/>
        <dbReference type="ChEBI" id="CHEBI:15378"/>
        <dbReference type="ChEBI" id="CHEBI:29999"/>
        <dbReference type="ChEBI" id="CHEBI:30616"/>
        <dbReference type="ChEBI" id="CHEBI:83421"/>
        <dbReference type="ChEBI" id="CHEBI:456216"/>
        <dbReference type="EC" id="2.7.11.1"/>
    </reaction>
</comment>
<comment type="catalytic activity">
    <reaction>
        <text>L-threonyl-[protein] + ATP = O-phospho-L-threonyl-[protein] + ADP + H(+)</text>
        <dbReference type="Rhea" id="RHEA:46608"/>
        <dbReference type="Rhea" id="RHEA-COMP:11060"/>
        <dbReference type="Rhea" id="RHEA-COMP:11605"/>
        <dbReference type="ChEBI" id="CHEBI:15378"/>
        <dbReference type="ChEBI" id="CHEBI:30013"/>
        <dbReference type="ChEBI" id="CHEBI:30616"/>
        <dbReference type="ChEBI" id="CHEBI:61977"/>
        <dbReference type="ChEBI" id="CHEBI:456216"/>
        <dbReference type="EC" id="2.7.11.1"/>
    </reaction>
</comment>
<comment type="subunit">
    <text evidence="1 7">Interacts with MAPK8IP1/JIP-1, MAPK8IP2/JIP-2, MAPK9/JNK2, PPP1R9B/NEURABIN-2 and actin (By similarity). Binds to and stabilizes microtubules; binding affinity is strongly reduced by autophosphorylation.</text>
</comment>
<comment type="subcellular location">
    <subcellularLocation>
        <location evidence="7">Cytoplasm</location>
        <location evidence="7">Cytoskeleton</location>
    </subcellularLocation>
    <text>Colocalizes with microtubules. When overexpressed in sympathetic neurons, localizes to cell body and to the terminal segments of axons and dendrites.</text>
</comment>
<comment type="alternative products">
    <event type="alternative splicing"/>
    <isoform>
        <id>Q5MPA9-1</id>
        <name>1</name>
        <sequence type="displayed"/>
    </isoform>
    <isoform>
        <id>Q5MPA9-2</id>
        <name>2</name>
        <sequence type="described" ref="VSP_038898 VSP_038899"/>
    </isoform>
    <isoform>
        <id>Q5MPA9-3</id>
        <name>3</name>
        <sequence type="described" ref="VSP_038897"/>
    </isoform>
</comment>
<comment type="domain">
    <text>The doublecortin domains are involved in the binding to microtubules.</text>
</comment>
<comment type="PTM">
    <text>Autophosphorylated.</text>
</comment>
<comment type="similarity">
    <text evidence="9">Belongs to the protein kinase superfamily. CAMK Ser/Thr protein kinase family. CaMK subfamily.</text>
</comment>
<sequence length="767" mass="84016">MASTRSIELEHFEERDKRPRPGSRRGAPSSSGGSSISGPKGNGLIPSPAHSAHCSFYRTRTLQALSSEKKAKKARFYRNGDRYFKGLVFAISSDRFRSFDALLIELTRSLSDNVNLPQGVRTIYTVDGSRKVTSLDELLEGESYVCASNEPFRKVDYTKNVNPNWSVNIKGGTTRTLAVASAKSEVKESKDFIKPKLVTVIRSGVKPRKAVRILLNKKTAHSFEQVLTDITEAIKLDSGVVKRLCTLDGKQVTCLQDFFGDDDVFIACGPEKYRYAQDDFVLDHSECRVLKSSYSRASAAKYSGSRSPGLSRRSKSPASVKRAGHSSAYSTAKSPVNGTPSSQLSTPKSTKSSSSSPTSPGSFRGLKQISAQGRSSSNVNGGPELDRCMSPEGVNGNRCSESFTLLEKYRIGKVIGDGNFAVVKECMDRSTGKEFALKIIDKAKCCGKEHLIENEVSILRRVKHPNIIMLVEEMETTTELFLVMELVKGGDLFDAITSSTKYTERDGSAMVYNLASALRYLHGLSIVHRDIKPENLLVCEYPDGTKSLKLGDFGLATVVEGPLYTVCGTPTYVAPEIIAETGYGLKVDVWAAGVITYILLCGFPPFRSENNLQEDLFDQILAGKLEFPAPYWDNITDSAKELISQMLQVNVEARCTAGEILSHPWVSDDASQENNMQAEVTGKLKQHFNNALPKQNSTTTGVSVIMNTALDKEGQVFCSKHCRDSSKSSREQTSAREAPPPPESPRPPGPPATSGCDPAGTWRRHRD</sequence>
<organism>
    <name type="scientific">Rattus norvegicus</name>
    <name type="common">Rat</name>
    <dbReference type="NCBI Taxonomy" id="10116"/>
    <lineage>
        <taxon>Eukaryota</taxon>
        <taxon>Metazoa</taxon>
        <taxon>Chordata</taxon>
        <taxon>Craniata</taxon>
        <taxon>Vertebrata</taxon>
        <taxon>Euteleostomi</taxon>
        <taxon>Mammalia</taxon>
        <taxon>Eutheria</taxon>
        <taxon>Euarchontoglires</taxon>
        <taxon>Glires</taxon>
        <taxon>Rodentia</taxon>
        <taxon>Myomorpha</taxon>
        <taxon>Muroidea</taxon>
        <taxon>Muridae</taxon>
        <taxon>Murinae</taxon>
        <taxon>Rattus</taxon>
    </lineage>
</organism>